<keyword id="KW-0963">Cytoplasm</keyword>
<keyword id="KW-1185">Reference proteome</keyword>
<keyword id="KW-0690">Ribosome biogenesis</keyword>
<comment type="function">
    <text evidence="1">Required for maturation of 30S ribosomal subunits.</text>
</comment>
<comment type="subcellular location">
    <subcellularLocation>
        <location evidence="1">Cytoplasm</location>
    </subcellularLocation>
</comment>
<comment type="similarity">
    <text evidence="1">Belongs to the RimP family.</text>
</comment>
<sequence length="151" mass="17515">MKQEIIEKVKEMLQPLLEERGLKLVDIEYVTEGKPVLRIYIYNPEGTTIEDCEWISRRIGALLDIEDLIPVSYTLEVSSPGLERKLKNVEEYDIFKGRDIKIVLKEPVDKKNVIKGVLKGREDNNIIVEEEGEEVRIPLENIARANLEFKH</sequence>
<proteinExistence type="inferred from homology"/>
<feature type="chain" id="PRO_0000384730" description="Ribosome maturation factor RimP">
    <location>
        <begin position="1"/>
        <end position="151"/>
    </location>
</feature>
<name>RIMP_PERMH</name>
<organism>
    <name type="scientific">Persephonella marina (strain DSM 14350 / EX-H1)</name>
    <dbReference type="NCBI Taxonomy" id="123214"/>
    <lineage>
        <taxon>Bacteria</taxon>
        <taxon>Pseudomonadati</taxon>
        <taxon>Aquificota</taxon>
        <taxon>Aquificia</taxon>
        <taxon>Aquificales</taxon>
        <taxon>Hydrogenothermaceae</taxon>
        <taxon>Persephonella</taxon>
    </lineage>
</organism>
<protein>
    <recommendedName>
        <fullName evidence="1">Ribosome maturation factor RimP</fullName>
    </recommendedName>
</protein>
<evidence type="ECO:0000255" key="1">
    <source>
        <dbReference type="HAMAP-Rule" id="MF_01077"/>
    </source>
</evidence>
<dbReference type="EMBL" id="CP001230">
    <property type="protein sequence ID" value="ACO03834.1"/>
    <property type="molecule type" value="Genomic_DNA"/>
</dbReference>
<dbReference type="SMR" id="C0QTL6"/>
<dbReference type="STRING" id="123214.PERMA_0235"/>
<dbReference type="PaxDb" id="123214-PERMA_0235"/>
<dbReference type="KEGG" id="pmx:PERMA_0235"/>
<dbReference type="eggNOG" id="COG0779">
    <property type="taxonomic scope" value="Bacteria"/>
</dbReference>
<dbReference type="HOGENOM" id="CLU_070525_2_2_0"/>
<dbReference type="Proteomes" id="UP000001366">
    <property type="component" value="Chromosome"/>
</dbReference>
<dbReference type="GO" id="GO:0005829">
    <property type="term" value="C:cytosol"/>
    <property type="evidence" value="ECO:0007669"/>
    <property type="project" value="TreeGrafter"/>
</dbReference>
<dbReference type="GO" id="GO:0000028">
    <property type="term" value="P:ribosomal small subunit assembly"/>
    <property type="evidence" value="ECO:0007669"/>
    <property type="project" value="TreeGrafter"/>
</dbReference>
<dbReference type="GO" id="GO:0006412">
    <property type="term" value="P:translation"/>
    <property type="evidence" value="ECO:0007669"/>
    <property type="project" value="TreeGrafter"/>
</dbReference>
<dbReference type="CDD" id="cd01734">
    <property type="entry name" value="YlxS_C"/>
    <property type="match status" value="1"/>
</dbReference>
<dbReference type="FunFam" id="3.30.300.70:FF:000001">
    <property type="entry name" value="Ribosome maturation factor RimP"/>
    <property type="match status" value="1"/>
</dbReference>
<dbReference type="Gene3D" id="2.30.30.180">
    <property type="entry name" value="Ribosome maturation factor RimP, C-terminal domain"/>
    <property type="match status" value="1"/>
</dbReference>
<dbReference type="Gene3D" id="3.30.300.70">
    <property type="entry name" value="RimP-like superfamily, N-terminal"/>
    <property type="match status" value="1"/>
</dbReference>
<dbReference type="HAMAP" id="MF_01077">
    <property type="entry name" value="RimP"/>
    <property type="match status" value="1"/>
</dbReference>
<dbReference type="InterPro" id="IPR003728">
    <property type="entry name" value="Ribosome_maturation_RimP"/>
</dbReference>
<dbReference type="InterPro" id="IPR028998">
    <property type="entry name" value="RimP_C"/>
</dbReference>
<dbReference type="InterPro" id="IPR036847">
    <property type="entry name" value="RimP_C_sf"/>
</dbReference>
<dbReference type="InterPro" id="IPR028989">
    <property type="entry name" value="RimP_N"/>
</dbReference>
<dbReference type="InterPro" id="IPR035956">
    <property type="entry name" value="RimP_N_sf"/>
</dbReference>
<dbReference type="PANTHER" id="PTHR33867">
    <property type="entry name" value="RIBOSOME MATURATION FACTOR RIMP"/>
    <property type="match status" value="1"/>
</dbReference>
<dbReference type="PANTHER" id="PTHR33867:SF1">
    <property type="entry name" value="RIBOSOME MATURATION FACTOR RIMP"/>
    <property type="match status" value="1"/>
</dbReference>
<dbReference type="Pfam" id="PF17384">
    <property type="entry name" value="DUF150_C"/>
    <property type="match status" value="1"/>
</dbReference>
<dbReference type="Pfam" id="PF02576">
    <property type="entry name" value="RimP_N"/>
    <property type="match status" value="1"/>
</dbReference>
<dbReference type="SUPFAM" id="SSF74942">
    <property type="entry name" value="YhbC-like, C-terminal domain"/>
    <property type="match status" value="1"/>
</dbReference>
<dbReference type="SUPFAM" id="SSF75420">
    <property type="entry name" value="YhbC-like, N-terminal domain"/>
    <property type="match status" value="1"/>
</dbReference>
<reference key="1">
    <citation type="journal article" date="2009" name="J. Bacteriol.">
        <title>Complete and draft genome sequences of six members of the Aquificales.</title>
        <authorList>
            <person name="Reysenbach A.-L."/>
            <person name="Hamamura N."/>
            <person name="Podar M."/>
            <person name="Griffiths E."/>
            <person name="Ferreira S."/>
            <person name="Hochstein R."/>
            <person name="Heidelberg J."/>
            <person name="Johnson J."/>
            <person name="Mead D."/>
            <person name="Pohorille A."/>
            <person name="Sarmiento M."/>
            <person name="Schweighofer K."/>
            <person name="Seshadri R."/>
            <person name="Voytek M.A."/>
        </authorList>
    </citation>
    <scope>NUCLEOTIDE SEQUENCE [LARGE SCALE GENOMIC DNA]</scope>
    <source>
        <strain>DSM 14350 / EX-H1</strain>
    </source>
</reference>
<accession>C0QTL6</accession>
<gene>
    <name evidence="1" type="primary">rimP</name>
    <name type="ordered locus">PERMA_0235</name>
</gene>